<feature type="chain" id="PRO_0000162220" description="Pyruvate dehydrogenase E1 component subunit beta">
    <location>
        <begin position="1"/>
        <end position="327"/>
    </location>
</feature>
<feature type="binding site" evidence="1">
    <location>
        <position position="60"/>
    </location>
    <ligand>
        <name>thiamine diphosphate</name>
        <dbReference type="ChEBI" id="CHEBI:58937"/>
    </ligand>
</feature>
<protein>
    <recommendedName>
        <fullName>Pyruvate dehydrogenase E1 component subunit beta</fullName>
        <ecNumber>1.2.4.1</ecNumber>
    </recommendedName>
</protein>
<name>ODPB_ACHLA</name>
<dbReference type="EC" id="1.2.4.1"/>
<dbReference type="EMBL" id="M81753">
    <property type="protein sequence ID" value="AAA21908.1"/>
    <property type="molecule type" value="Genomic_DNA"/>
</dbReference>
<dbReference type="PIR" id="B42653">
    <property type="entry name" value="B42653"/>
</dbReference>
<dbReference type="RefSeq" id="WP_012243237.1">
    <property type="nucleotide sequence ID" value="NZ_VKID01000002.1"/>
</dbReference>
<dbReference type="SMR" id="P35488"/>
<dbReference type="OMA" id="LPLDTCF"/>
<dbReference type="GO" id="GO:0004739">
    <property type="term" value="F:pyruvate dehydrogenase (acetyl-transferring) activity"/>
    <property type="evidence" value="ECO:0007669"/>
    <property type="project" value="UniProtKB-EC"/>
</dbReference>
<dbReference type="CDD" id="cd07036">
    <property type="entry name" value="TPP_PYR_E1-PDHc-beta_like"/>
    <property type="match status" value="1"/>
</dbReference>
<dbReference type="FunFam" id="3.40.50.920:FF:000001">
    <property type="entry name" value="Pyruvate dehydrogenase E1 beta subunit"/>
    <property type="match status" value="1"/>
</dbReference>
<dbReference type="FunFam" id="3.40.50.970:FF:000001">
    <property type="entry name" value="Pyruvate dehydrogenase E1 beta subunit"/>
    <property type="match status" value="1"/>
</dbReference>
<dbReference type="Gene3D" id="3.40.50.920">
    <property type="match status" value="1"/>
</dbReference>
<dbReference type="Gene3D" id="3.40.50.970">
    <property type="match status" value="1"/>
</dbReference>
<dbReference type="InterPro" id="IPR029061">
    <property type="entry name" value="THDP-binding"/>
</dbReference>
<dbReference type="InterPro" id="IPR009014">
    <property type="entry name" value="Transketo_C/PFOR_II"/>
</dbReference>
<dbReference type="InterPro" id="IPR005475">
    <property type="entry name" value="Transketolase-like_Pyr-bd"/>
</dbReference>
<dbReference type="InterPro" id="IPR033248">
    <property type="entry name" value="Transketolase_C"/>
</dbReference>
<dbReference type="PANTHER" id="PTHR43257">
    <property type="entry name" value="PYRUVATE DEHYDROGENASE E1 COMPONENT BETA SUBUNIT"/>
    <property type="match status" value="1"/>
</dbReference>
<dbReference type="PANTHER" id="PTHR43257:SF2">
    <property type="entry name" value="PYRUVATE DEHYDROGENASE E1 COMPONENT SUBUNIT BETA"/>
    <property type="match status" value="1"/>
</dbReference>
<dbReference type="Pfam" id="PF02779">
    <property type="entry name" value="Transket_pyr"/>
    <property type="match status" value="1"/>
</dbReference>
<dbReference type="Pfam" id="PF02780">
    <property type="entry name" value="Transketolase_C"/>
    <property type="match status" value="1"/>
</dbReference>
<dbReference type="SMART" id="SM00861">
    <property type="entry name" value="Transket_pyr"/>
    <property type="match status" value="1"/>
</dbReference>
<dbReference type="SUPFAM" id="SSF52518">
    <property type="entry name" value="Thiamin diphosphate-binding fold (THDP-binding)"/>
    <property type="match status" value="1"/>
</dbReference>
<dbReference type="SUPFAM" id="SSF52922">
    <property type="entry name" value="TK C-terminal domain-like"/>
    <property type="match status" value="1"/>
</dbReference>
<organism>
    <name type="scientific">Acholeplasma laidlawii</name>
    <dbReference type="NCBI Taxonomy" id="2148"/>
    <lineage>
        <taxon>Bacteria</taxon>
        <taxon>Bacillati</taxon>
        <taxon>Mycoplasmatota</taxon>
        <taxon>Mollicutes</taxon>
        <taxon>Acholeplasmatales</taxon>
        <taxon>Acholeplasmataceae</taxon>
        <taxon>Acholeplasma</taxon>
    </lineage>
</organism>
<evidence type="ECO:0000250" key="1"/>
<comment type="function">
    <text>The pyruvate dehydrogenase complex catalyzes the overall conversion of pyruvate to acetyl-CoA and CO(2). It contains multiple copies of three enzymatic components: pyruvate dehydrogenase (E1), dihydrolipoamide acetyltransferase (E2) and lipoamide dehydrogenase (E3).</text>
</comment>
<comment type="catalytic activity">
    <reaction>
        <text>N(6)-[(R)-lipoyl]-L-lysyl-[protein] + pyruvate + H(+) = N(6)-[(R)-S(8)-acetyldihydrolipoyl]-L-lysyl-[protein] + CO2</text>
        <dbReference type="Rhea" id="RHEA:19189"/>
        <dbReference type="Rhea" id="RHEA-COMP:10474"/>
        <dbReference type="Rhea" id="RHEA-COMP:10478"/>
        <dbReference type="ChEBI" id="CHEBI:15361"/>
        <dbReference type="ChEBI" id="CHEBI:15378"/>
        <dbReference type="ChEBI" id="CHEBI:16526"/>
        <dbReference type="ChEBI" id="CHEBI:83099"/>
        <dbReference type="ChEBI" id="CHEBI:83111"/>
        <dbReference type="EC" id="1.2.4.1"/>
    </reaction>
</comment>
<comment type="cofactor">
    <cofactor>
        <name>thiamine diphosphate</name>
        <dbReference type="ChEBI" id="CHEBI:58937"/>
    </cofactor>
</comment>
<comment type="subunit">
    <text>Heterodimer of an alpha and a beta chain.</text>
</comment>
<sequence>MAIITLLEAINQAIDQAMEKDESIVVFGEDAGFEGGVFRVTAGLQKKYGETRVFDTPIAESAIVGSAVGMAINGLKPIAEIQFDGFIFPGYTDLVTHAARMRNRSRGQFTVPMVLRLPHGGGIRALEHHSEALEVLFGSIPGLKVVTPSTPYDAKGLLLAAINDPDPVVFLEPKRIYRAGKQEVPAEMYEIPIGKAKVVKQGTDMTVVAWGSIVREVEKAVKLVEAEGISVEIIDLRTISPIDEETILNSVKKTGKFMVVTEAVKSYGPAAELITMVNEKAFFHLEAAPVRFTGFDITVPLARGEHYHFPQPEKIAAYIRKLAKARP</sequence>
<gene>
    <name type="primary">pdhB</name>
</gene>
<proteinExistence type="evidence at protein level"/>
<keyword id="KW-0903">Direct protein sequencing</keyword>
<keyword id="KW-0560">Oxidoreductase</keyword>
<keyword id="KW-0670">Pyruvate</keyword>
<keyword id="KW-0786">Thiamine pyrophosphate</keyword>
<accession>P35488</accession>
<reference key="1">
    <citation type="journal article" date="1992" name="J. Bacteriol.">
        <title>Identification and analysis of the genes coding for the putative pyruvate dehydrogenase enzyme complex in Acholeplasma laidlawii.</title>
        <authorList>
            <person name="Wallbrandt P."/>
            <person name="Tegman V."/>
            <person name="Jonsson B.-H."/>
            <person name="Wieslander A."/>
        </authorList>
    </citation>
    <scope>NUCLEOTIDE SEQUENCE [GENOMIC DNA]</scope>
    <scope>PARTIAL PROTEIN SEQUENCE</scope>
</reference>